<reference key="1">
    <citation type="journal article" date="2008" name="Antimicrob. Agents Chemother.">
        <title>Whole-genome pyrosequencing of an epidemic multidrug-resistant Acinetobacter baumannii strain belonging to the European clone II group.</title>
        <authorList>
            <person name="Iacono M."/>
            <person name="Villa L."/>
            <person name="Fortini D."/>
            <person name="Bordoni R."/>
            <person name="Imperi F."/>
            <person name="Bonnal R.J."/>
            <person name="Sicheritz-Ponten T."/>
            <person name="De Bellis G."/>
            <person name="Visca P."/>
            <person name="Cassone A."/>
            <person name="Carattoli A."/>
        </authorList>
    </citation>
    <scope>NUCLEOTIDE SEQUENCE [LARGE SCALE GENOMIC DNA]</scope>
    <source>
        <strain>ACICU</strain>
    </source>
</reference>
<name>KATG_ACIBC</name>
<gene>
    <name evidence="1" type="primary">katG</name>
    <name type="ordered locus">ACICU_00418</name>
</gene>
<comment type="function">
    <text evidence="1">Bifunctional enzyme with both catalase and broad-spectrum peroxidase activity.</text>
</comment>
<comment type="catalytic activity">
    <reaction evidence="1">
        <text>H2O2 + AH2 = A + 2 H2O</text>
        <dbReference type="Rhea" id="RHEA:30275"/>
        <dbReference type="ChEBI" id="CHEBI:13193"/>
        <dbReference type="ChEBI" id="CHEBI:15377"/>
        <dbReference type="ChEBI" id="CHEBI:16240"/>
        <dbReference type="ChEBI" id="CHEBI:17499"/>
        <dbReference type="EC" id="1.11.1.21"/>
    </reaction>
</comment>
<comment type="catalytic activity">
    <reaction evidence="1">
        <text>2 H2O2 = O2 + 2 H2O</text>
        <dbReference type="Rhea" id="RHEA:20309"/>
        <dbReference type="ChEBI" id="CHEBI:15377"/>
        <dbReference type="ChEBI" id="CHEBI:15379"/>
        <dbReference type="ChEBI" id="CHEBI:16240"/>
        <dbReference type="EC" id="1.11.1.21"/>
    </reaction>
</comment>
<comment type="cofactor">
    <cofactor evidence="1">
        <name>heme b</name>
        <dbReference type="ChEBI" id="CHEBI:60344"/>
    </cofactor>
    <text evidence="1">Binds 1 heme b (iron(II)-protoporphyrin IX) group per dimer.</text>
</comment>
<comment type="subunit">
    <text evidence="1">Homodimer or homotetramer.</text>
</comment>
<comment type="PTM">
    <text evidence="1">Formation of the three residue Trp-Tyr-Met cross-link is important for the catalase, but not the peroxidase activity of the enzyme.</text>
</comment>
<comment type="similarity">
    <text evidence="1">Belongs to the peroxidase family. Peroxidase/catalase subfamily.</text>
</comment>
<protein>
    <recommendedName>
        <fullName evidence="1">Catalase-peroxidase</fullName>
        <shortName evidence="1">CP</shortName>
        <ecNumber evidence="1">1.11.1.21</ecNumber>
    </recommendedName>
    <alternativeName>
        <fullName evidence="1">Peroxidase/catalase</fullName>
    </alternativeName>
</protein>
<accession>B2I352</accession>
<proteinExistence type="inferred from homology"/>
<dbReference type="EC" id="1.11.1.21" evidence="1"/>
<dbReference type="EMBL" id="CP000863">
    <property type="protein sequence ID" value="ACC55730.1"/>
    <property type="molecule type" value="Genomic_DNA"/>
</dbReference>
<dbReference type="RefSeq" id="WP_000064297.1">
    <property type="nucleotide sequence ID" value="NZ_CP031380.1"/>
</dbReference>
<dbReference type="SMR" id="B2I352"/>
<dbReference type="KEGG" id="abc:ACICU_00418"/>
<dbReference type="HOGENOM" id="CLU_025424_2_0_6"/>
<dbReference type="Proteomes" id="UP000008839">
    <property type="component" value="Chromosome"/>
</dbReference>
<dbReference type="GO" id="GO:0005829">
    <property type="term" value="C:cytosol"/>
    <property type="evidence" value="ECO:0007669"/>
    <property type="project" value="TreeGrafter"/>
</dbReference>
<dbReference type="GO" id="GO:0004096">
    <property type="term" value="F:catalase activity"/>
    <property type="evidence" value="ECO:0007669"/>
    <property type="project" value="UniProtKB-UniRule"/>
</dbReference>
<dbReference type="GO" id="GO:0020037">
    <property type="term" value="F:heme binding"/>
    <property type="evidence" value="ECO:0007669"/>
    <property type="project" value="InterPro"/>
</dbReference>
<dbReference type="GO" id="GO:0046872">
    <property type="term" value="F:metal ion binding"/>
    <property type="evidence" value="ECO:0007669"/>
    <property type="project" value="UniProtKB-KW"/>
</dbReference>
<dbReference type="GO" id="GO:0070301">
    <property type="term" value="P:cellular response to hydrogen peroxide"/>
    <property type="evidence" value="ECO:0007669"/>
    <property type="project" value="TreeGrafter"/>
</dbReference>
<dbReference type="GO" id="GO:0042744">
    <property type="term" value="P:hydrogen peroxide catabolic process"/>
    <property type="evidence" value="ECO:0007669"/>
    <property type="project" value="UniProtKB-KW"/>
</dbReference>
<dbReference type="FunFam" id="1.10.420.10:FF:000002">
    <property type="entry name" value="Catalase-peroxidase"/>
    <property type="match status" value="1"/>
</dbReference>
<dbReference type="FunFam" id="1.10.420.10:FF:000004">
    <property type="entry name" value="Catalase-peroxidase"/>
    <property type="match status" value="1"/>
</dbReference>
<dbReference type="FunFam" id="1.10.520.10:FF:000002">
    <property type="entry name" value="Catalase-peroxidase"/>
    <property type="match status" value="1"/>
</dbReference>
<dbReference type="Gene3D" id="1.10.520.10">
    <property type="match status" value="2"/>
</dbReference>
<dbReference type="Gene3D" id="1.10.420.10">
    <property type="entry name" value="Peroxidase, domain 2"/>
    <property type="match status" value="2"/>
</dbReference>
<dbReference type="HAMAP" id="MF_01961">
    <property type="entry name" value="Catal_peroxid"/>
    <property type="match status" value="1"/>
</dbReference>
<dbReference type="InterPro" id="IPR000763">
    <property type="entry name" value="Catalase_peroxidase"/>
</dbReference>
<dbReference type="InterPro" id="IPR002016">
    <property type="entry name" value="Haem_peroxidase"/>
</dbReference>
<dbReference type="InterPro" id="IPR010255">
    <property type="entry name" value="Haem_peroxidase_sf"/>
</dbReference>
<dbReference type="InterPro" id="IPR019794">
    <property type="entry name" value="Peroxidases_AS"/>
</dbReference>
<dbReference type="NCBIfam" id="TIGR00198">
    <property type="entry name" value="cat_per_HPI"/>
    <property type="match status" value="1"/>
</dbReference>
<dbReference type="NCBIfam" id="NF011635">
    <property type="entry name" value="PRK15061.1"/>
    <property type="match status" value="1"/>
</dbReference>
<dbReference type="PANTHER" id="PTHR30555:SF0">
    <property type="entry name" value="CATALASE-PEROXIDASE"/>
    <property type="match status" value="1"/>
</dbReference>
<dbReference type="PANTHER" id="PTHR30555">
    <property type="entry name" value="HYDROPEROXIDASE I, BIFUNCTIONAL CATALASE-PEROXIDASE"/>
    <property type="match status" value="1"/>
</dbReference>
<dbReference type="Pfam" id="PF00141">
    <property type="entry name" value="peroxidase"/>
    <property type="match status" value="2"/>
</dbReference>
<dbReference type="PRINTS" id="PR00460">
    <property type="entry name" value="BPEROXIDASE"/>
</dbReference>
<dbReference type="PRINTS" id="PR00458">
    <property type="entry name" value="PEROXIDASE"/>
</dbReference>
<dbReference type="SUPFAM" id="SSF48113">
    <property type="entry name" value="Heme-dependent peroxidases"/>
    <property type="match status" value="2"/>
</dbReference>
<dbReference type="PROSITE" id="PS00436">
    <property type="entry name" value="PEROXIDASE_2"/>
    <property type="match status" value="1"/>
</dbReference>
<dbReference type="PROSITE" id="PS50873">
    <property type="entry name" value="PEROXIDASE_4"/>
    <property type="match status" value="1"/>
</dbReference>
<organism>
    <name type="scientific">Acinetobacter baumannii (strain ACICU)</name>
    <dbReference type="NCBI Taxonomy" id="405416"/>
    <lineage>
        <taxon>Bacteria</taxon>
        <taxon>Pseudomonadati</taxon>
        <taxon>Pseudomonadota</taxon>
        <taxon>Gammaproteobacteria</taxon>
        <taxon>Moraxellales</taxon>
        <taxon>Moraxellaceae</taxon>
        <taxon>Acinetobacter</taxon>
        <taxon>Acinetobacter calcoaceticus/baumannii complex</taxon>
    </lineage>
</organism>
<sequence length="718" mass="78609">MSNESKCPFSGHNSKPQVTVGGGTANLHWWPNQLRVDLLNQHSERSNPLGKDFNYRQEFKKLDYYALKADIKNVLTDSQDWWPADWGNYTGLFIRLAWHAAGTYRMGDGRGGAGRGQQRFAPLNSWPDNASLDKARRLLWPVKQKYGQKISWADLFILAGNIALESSGFRTFGFGAGREDVWEPDNDVNWGDEKEWLAHRNSEALAGSNLAATEMGLIYVNPEGPQASGDPRSAAPFIRATFGNMAMDDEEIVALIAGGHTLGKTHGAASADHVQADPEGAPIEQMGFGWANSYGTGVGKDAITSGLEVIWSQTPTQWSNYFFENLFKYEWVQERSPAGAIQWVAADAEAIIPDPFDPSIKRKPTMLTTDLTLRFDPEFEKISRRFLNDPQAFANAFARAWFKLTHRDMGPKARYLGPEVPAEDLIWQDPLPAASATPSSASIADAKAKIVALGLSTGELVSLAWASASTFRGGDKRGGANGARIALSPQREWEVNKKAVETLTKIEELKASTQLSLADLIVLAGNVGVEQAAQAAGFNITVPFAPGRVDALQSQTDVESFQLLLGLADGFRNWKKQGVNTPAEVLLIDKAQQLTLTAPELTALIGGLRVLGTNWDGSQHGVFTQQVGVLSTDFFTNLLDMSNVWAPVDSTSEVFEGKDRKSGTVKFTATRNDLVFGSNSILRALAEVYAQADGKEKFVQDFVAAWTKVMNLDRFDLA</sequence>
<evidence type="ECO:0000255" key="1">
    <source>
        <dbReference type="HAMAP-Rule" id="MF_01961"/>
    </source>
</evidence>
<keyword id="KW-0349">Heme</keyword>
<keyword id="KW-0376">Hydrogen peroxide</keyword>
<keyword id="KW-0408">Iron</keyword>
<keyword id="KW-0479">Metal-binding</keyword>
<keyword id="KW-0560">Oxidoreductase</keyword>
<keyword id="KW-0575">Peroxidase</keyword>
<feature type="chain" id="PRO_0000354711" description="Catalase-peroxidase">
    <location>
        <begin position="1"/>
        <end position="718"/>
    </location>
</feature>
<feature type="active site" description="Proton acceptor" evidence="1">
    <location>
        <position position="99"/>
    </location>
</feature>
<feature type="binding site" description="axial binding residue" evidence="1">
    <location>
        <position position="260"/>
    </location>
    <ligand>
        <name>heme b</name>
        <dbReference type="ChEBI" id="CHEBI:60344"/>
    </ligand>
    <ligandPart>
        <name>Fe</name>
        <dbReference type="ChEBI" id="CHEBI:18248"/>
    </ligandPart>
</feature>
<feature type="site" description="Transition state stabilizer" evidence="1">
    <location>
        <position position="95"/>
    </location>
</feature>
<feature type="cross-link" description="Tryptophyl-tyrosyl-methioninium (Trp-Tyr) (with M-245)" evidence="1">
    <location>
        <begin position="98"/>
        <end position="219"/>
    </location>
</feature>
<feature type="cross-link" description="Tryptophyl-tyrosyl-methioninium (Tyr-Met) (with W-98)" evidence="1">
    <location>
        <begin position="219"/>
        <end position="245"/>
    </location>
</feature>